<feature type="chain" id="PRO_0000286869" description="Cardosin-E heavy chain" evidence="7">
    <location>
        <begin position="1"/>
        <end status="unknown"/>
    </location>
</feature>
<feature type="chain" id="PRO_0000394452" description="Cardosin-E light chain" evidence="7">
    <location>
        <begin status="unknown"/>
        <end position="224" status="greater than"/>
    </location>
</feature>
<feature type="domain" description="Peptidase A1" evidence="5">
    <location>
        <begin position="1"/>
        <end position="221"/>
    </location>
</feature>
<feature type="active site" evidence="1 6">
    <location>
        <position position="35"/>
    </location>
</feature>
<feature type="active site" evidence="1 6">
    <location>
        <position position="134"/>
    </location>
</feature>
<feature type="disulfide bond" evidence="1 4">
    <location>
        <begin position="125"/>
        <end position="129"/>
    </location>
</feature>
<feature type="disulfide bond" evidence="1 4">
    <location>
        <begin status="unknown"/>
        <end position="181"/>
    </location>
</feature>
<feature type="non-consecutive residues" evidence="8">
    <location>
        <begin position="47"/>
        <end position="48"/>
    </location>
</feature>
<feature type="non-consecutive residues" evidence="8">
    <location>
        <begin position="65"/>
        <end position="66"/>
    </location>
</feature>
<feature type="non-consecutive residues" evidence="8">
    <location>
        <begin position="157"/>
        <end position="158"/>
    </location>
</feature>
<feature type="non-consecutive residues" evidence="8">
    <location>
        <begin position="163"/>
        <end position="164"/>
    </location>
</feature>
<feature type="non-consecutive residues" evidence="8">
    <location>
        <begin position="175"/>
        <end position="176"/>
    </location>
</feature>
<feature type="non-terminal residue" evidence="8">
    <location>
        <position position="224"/>
    </location>
</feature>
<accession>P85136</accession>
<evidence type="ECO:0000250" key="1">
    <source>
        <dbReference type="UniProtKB" id="P42210"/>
    </source>
</evidence>
<evidence type="ECO:0000250" key="2">
    <source>
        <dbReference type="UniProtKB" id="Q9XFX3"/>
    </source>
</evidence>
<evidence type="ECO:0000255" key="3"/>
<evidence type="ECO:0000255" key="4">
    <source>
        <dbReference type="PROSITE-ProRule" id="PRU00415"/>
    </source>
</evidence>
<evidence type="ECO:0000255" key="5">
    <source>
        <dbReference type="PROSITE-ProRule" id="PRU01103"/>
    </source>
</evidence>
<evidence type="ECO:0000255" key="6">
    <source>
        <dbReference type="PROSITE-ProRule" id="PRU10094"/>
    </source>
</evidence>
<evidence type="ECO:0000269" key="7">
    <source>
    </source>
</evidence>
<evidence type="ECO:0000303" key="8">
    <source>
    </source>
</evidence>
<evidence type="ECO:0000305" key="9"/>
<organism>
    <name type="scientific">Cynara cardunculus</name>
    <name type="common">Cardoon</name>
    <dbReference type="NCBI Taxonomy" id="4265"/>
    <lineage>
        <taxon>Eukaryota</taxon>
        <taxon>Viridiplantae</taxon>
        <taxon>Streptophyta</taxon>
        <taxon>Embryophyta</taxon>
        <taxon>Tracheophyta</taxon>
        <taxon>Spermatophyta</taxon>
        <taxon>Magnoliopsida</taxon>
        <taxon>eudicotyledons</taxon>
        <taxon>Gunneridae</taxon>
        <taxon>Pentapetalae</taxon>
        <taxon>asterids</taxon>
        <taxon>campanulids</taxon>
        <taxon>Asterales</taxon>
        <taxon>Asteraceae</taxon>
        <taxon>Carduoideae</taxon>
        <taxon>Cardueae</taxon>
        <taxon>Carduinae</taxon>
        <taxon>Cynara</taxon>
    </lineage>
</organism>
<dbReference type="EC" id="3.4.23.-"/>
<dbReference type="SMR" id="P85136"/>
<dbReference type="GO" id="GO:0005783">
    <property type="term" value="C:endoplasmic reticulum"/>
    <property type="evidence" value="ECO:0007669"/>
    <property type="project" value="UniProtKB-KW"/>
</dbReference>
<dbReference type="GO" id="GO:0005576">
    <property type="term" value="C:extracellular region"/>
    <property type="evidence" value="ECO:0007669"/>
    <property type="project" value="UniProtKB-KW"/>
</dbReference>
<dbReference type="GO" id="GO:0016020">
    <property type="term" value="C:membrane"/>
    <property type="evidence" value="ECO:0007669"/>
    <property type="project" value="UniProtKB-KW"/>
</dbReference>
<dbReference type="GO" id="GO:0000326">
    <property type="term" value="C:protein storage vacuole"/>
    <property type="evidence" value="ECO:0007669"/>
    <property type="project" value="UniProtKB-SubCell"/>
</dbReference>
<dbReference type="GO" id="GO:0004190">
    <property type="term" value="F:aspartic-type endopeptidase activity"/>
    <property type="evidence" value="ECO:0007669"/>
    <property type="project" value="UniProtKB-KW"/>
</dbReference>
<dbReference type="GO" id="GO:0006508">
    <property type="term" value="P:proteolysis"/>
    <property type="evidence" value="ECO:0007669"/>
    <property type="project" value="UniProtKB-KW"/>
</dbReference>
<dbReference type="FunFam" id="2.40.70.10:FF:000115">
    <property type="entry name" value="Lysosomal aspartic protease"/>
    <property type="match status" value="1"/>
</dbReference>
<dbReference type="Gene3D" id="2.40.70.10">
    <property type="entry name" value="Acid Proteases"/>
    <property type="match status" value="3"/>
</dbReference>
<dbReference type="InterPro" id="IPR001461">
    <property type="entry name" value="Aspartic_peptidase_A1"/>
</dbReference>
<dbReference type="InterPro" id="IPR033121">
    <property type="entry name" value="PEPTIDASE_A1"/>
</dbReference>
<dbReference type="InterPro" id="IPR021109">
    <property type="entry name" value="Peptidase_aspartic_dom_sf"/>
</dbReference>
<dbReference type="PANTHER" id="PTHR47966:SF76">
    <property type="entry name" value="ASPARTIC PROTEINASE A1"/>
    <property type="match status" value="1"/>
</dbReference>
<dbReference type="PANTHER" id="PTHR47966">
    <property type="entry name" value="BETA-SITE APP-CLEAVING ENZYME, ISOFORM A-RELATED"/>
    <property type="match status" value="1"/>
</dbReference>
<dbReference type="Pfam" id="PF00026">
    <property type="entry name" value="Asp"/>
    <property type="match status" value="3"/>
</dbReference>
<dbReference type="PRINTS" id="PR00792">
    <property type="entry name" value="PEPSIN"/>
</dbReference>
<dbReference type="SUPFAM" id="SSF50630">
    <property type="entry name" value="Acid proteases"/>
    <property type="match status" value="1"/>
</dbReference>
<dbReference type="PROSITE" id="PS51767">
    <property type="entry name" value="PEPTIDASE_A1"/>
    <property type="match status" value="1"/>
</dbReference>
<name>CARDE_CYNCA</name>
<keyword id="KW-0064">Aspartyl protease</keyword>
<keyword id="KW-0134">Cell wall</keyword>
<keyword id="KW-0903">Direct protein sequencing</keyword>
<keyword id="KW-1015">Disulfide bond</keyword>
<keyword id="KW-0256">Endoplasmic reticulum</keyword>
<keyword id="KW-0272">Extracellular matrix</keyword>
<keyword id="KW-0325">Glycoprotein</keyword>
<keyword id="KW-0378">Hydrolase</keyword>
<keyword id="KW-0472">Membrane</keyword>
<keyword id="KW-0492">Microsome</keyword>
<keyword id="KW-0645">Protease</keyword>
<keyword id="KW-0964">Secreted</keyword>
<keyword id="KW-0926">Vacuole</keyword>
<keyword id="KW-0865">Zymogen</keyword>
<sequence>DSGSAIVALTNDRDTSYFGEIGIGTPPQKYTVIYDTGSSVLWVPSSKEQDFIEATDETDNVFLHRRFSFWLNRNVDEEEGGELVFGGLDPNHFRGDHTYVPVTYQYYWQFGIGDVLIGDKSTGFCAPGCQAFADSGTSLLSGPTAIVTQINHAIGANSEELNVKFGLTPEQYILKGEATQCISGFTAMDATLLGPLWILGDVFMRPYHTVFDYGNLLVGFAEAA</sequence>
<comment type="function">
    <text evidence="7">Aspartic protease with a high preference for bonds between hydrophobic residues.</text>
</comment>
<comment type="activity regulation">
    <text evidence="7">Inhibited by pepstatin.</text>
</comment>
<comment type="biophysicochemical properties">
    <kinetics>
        <KM evidence="7">0.64 mM for Lys-Pro-Ala-Glu-Phe-Phe(NO2)-Ala-Leu</KM>
    </kinetics>
    <phDependence>
        <text evidence="7">Optimim pH is 4.3. Active from pH 3 to 6.5.</text>
    </phDependence>
</comment>
<comment type="subunit">
    <text evidence="2 7">Heterodimer of a light chain and a heavy chain. An intermediate form is produced first, and undergoes proteolytic processing to remove the internal plant-specific insert (PSI) and the propeptide.</text>
</comment>
<comment type="subcellular location">
    <subcellularLocation>
        <location evidence="2">Microsome membrane</location>
    </subcellularLocation>
    <subcellularLocation>
        <location evidence="2">Protein storage vacuole</location>
    </subcellularLocation>
    <subcellularLocation>
        <location evidence="2">Secreted</location>
        <location evidence="2">Cell wall</location>
    </subcellularLocation>
    <subcellularLocation>
        <location evidence="2">Secreted</location>
        <location evidence="2">Extracellular space</location>
        <location evidence="2">Extracellular matrix</location>
    </subcellularLocation>
    <text evidence="2">Procardosin-E is associated with the microsomal membranes, the mature form is secreted.</text>
</comment>
<comment type="tissue specificity">
    <text evidence="7">Pistils.</text>
</comment>
<comment type="PTM">
    <text evidence="7">N-glycosylated.</text>
</comment>
<comment type="mass spectrometry">
    <molecule>Cardosin-E heavy chain</molecule>
    <text>Heavy chain.</text>
</comment>
<comment type="mass spectrometry">
    <text>Light chain. The measured range is unknown.</text>
</comment>
<comment type="similarity">
    <text evidence="3">Belongs to the peptidase A1 family.</text>
</comment>
<protein>
    <recommendedName>
        <fullName evidence="8">Cardosin-E</fullName>
        <ecNumber>3.4.23.-</ecNumber>
    </recommendedName>
    <component>
        <recommendedName>
            <fullName evidence="8">Cardosin-E heavy chain</fullName>
        </recommendedName>
    </component>
    <component>
        <recommendedName>
            <fullName evidence="8">Cardosin-E light chain</fullName>
        </recommendedName>
    </component>
</protein>
<proteinExistence type="evidence at protein level"/>
<reference evidence="9" key="1">
    <citation type="journal article" date="2009" name="Planta">
        <title>Multiplicity of aspartic proteinases from Cynara cardunculus L.</title>
        <authorList>
            <person name="Sarmento A.C."/>
            <person name="Lopes H."/>
            <person name="Oliveira C.S."/>
            <person name="Vitorino R."/>
            <person name="Samyn B."/>
            <person name="Sergeant K."/>
            <person name="Debyser G."/>
            <person name="Van Beeumen J."/>
            <person name="Domingues P."/>
            <person name="Amado F."/>
            <person name="Pires E."/>
            <person name="Domingues M.R."/>
            <person name="Barros M.T."/>
        </authorList>
    </citation>
    <scope>PROTEIN SEQUENCE</scope>
    <scope>FUNCTION</scope>
    <scope>ACTIVITY REGULATION</scope>
    <scope>BIOPHYSICOCHEMICAL PROPERTIES</scope>
    <scope>SUBUNIT</scope>
    <scope>TISSUE SPECIFICITY</scope>
    <scope>GLYCOSYLATION</scope>
    <scope>MASS SPECTROMETRY</scope>
    <source>
        <strain evidence="7">cv. Sylvestris</strain>
        <tissue evidence="7">Stigma</tissue>
    </source>
</reference>